<name>EX7S_SERP5</name>
<comment type="function">
    <text evidence="1">Bidirectionally degrades single-stranded DNA into large acid-insoluble oligonucleotides, which are then degraded further into small acid-soluble oligonucleotides.</text>
</comment>
<comment type="catalytic activity">
    <reaction evidence="1">
        <text>Exonucleolytic cleavage in either 5'- to 3'- or 3'- to 5'-direction to yield nucleoside 5'-phosphates.</text>
        <dbReference type="EC" id="3.1.11.6"/>
    </reaction>
</comment>
<comment type="subunit">
    <text evidence="1">Heterooligomer composed of large and small subunits.</text>
</comment>
<comment type="subcellular location">
    <subcellularLocation>
        <location evidence="1">Cytoplasm</location>
    </subcellularLocation>
</comment>
<comment type="similarity">
    <text evidence="1">Belongs to the XseB family.</text>
</comment>
<evidence type="ECO:0000255" key="1">
    <source>
        <dbReference type="HAMAP-Rule" id="MF_00337"/>
    </source>
</evidence>
<accession>A8GAP4</accession>
<organism>
    <name type="scientific">Serratia proteamaculans (strain 568)</name>
    <dbReference type="NCBI Taxonomy" id="399741"/>
    <lineage>
        <taxon>Bacteria</taxon>
        <taxon>Pseudomonadati</taxon>
        <taxon>Pseudomonadota</taxon>
        <taxon>Gammaproteobacteria</taxon>
        <taxon>Enterobacterales</taxon>
        <taxon>Yersiniaceae</taxon>
        <taxon>Serratia</taxon>
    </lineage>
</organism>
<dbReference type="EC" id="3.1.11.6" evidence="1"/>
<dbReference type="EMBL" id="CP000826">
    <property type="protein sequence ID" value="ABV40184.1"/>
    <property type="molecule type" value="Genomic_DNA"/>
</dbReference>
<dbReference type="SMR" id="A8GAP4"/>
<dbReference type="STRING" id="399741.Spro_1080"/>
<dbReference type="KEGG" id="spe:Spro_1080"/>
<dbReference type="eggNOG" id="COG1722">
    <property type="taxonomic scope" value="Bacteria"/>
</dbReference>
<dbReference type="HOGENOM" id="CLU_145918_3_3_6"/>
<dbReference type="GO" id="GO:0005829">
    <property type="term" value="C:cytosol"/>
    <property type="evidence" value="ECO:0007669"/>
    <property type="project" value="TreeGrafter"/>
</dbReference>
<dbReference type="GO" id="GO:0009318">
    <property type="term" value="C:exodeoxyribonuclease VII complex"/>
    <property type="evidence" value="ECO:0007669"/>
    <property type="project" value="InterPro"/>
</dbReference>
<dbReference type="GO" id="GO:0008855">
    <property type="term" value="F:exodeoxyribonuclease VII activity"/>
    <property type="evidence" value="ECO:0007669"/>
    <property type="project" value="UniProtKB-UniRule"/>
</dbReference>
<dbReference type="GO" id="GO:0006308">
    <property type="term" value="P:DNA catabolic process"/>
    <property type="evidence" value="ECO:0007669"/>
    <property type="project" value="UniProtKB-UniRule"/>
</dbReference>
<dbReference type="FunFam" id="1.10.287.1040:FF:000001">
    <property type="entry name" value="Exodeoxyribonuclease 7 small subunit"/>
    <property type="match status" value="1"/>
</dbReference>
<dbReference type="Gene3D" id="1.10.287.1040">
    <property type="entry name" value="Exonuclease VII, small subunit"/>
    <property type="match status" value="1"/>
</dbReference>
<dbReference type="HAMAP" id="MF_00337">
    <property type="entry name" value="Exonuc_7_S"/>
    <property type="match status" value="1"/>
</dbReference>
<dbReference type="InterPro" id="IPR003761">
    <property type="entry name" value="Exonuc_VII_S"/>
</dbReference>
<dbReference type="InterPro" id="IPR037004">
    <property type="entry name" value="Exonuc_VII_ssu_sf"/>
</dbReference>
<dbReference type="NCBIfam" id="NF002137">
    <property type="entry name" value="PRK00977.1-1"/>
    <property type="match status" value="1"/>
</dbReference>
<dbReference type="NCBIfam" id="NF002140">
    <property type="entry name" value="PRK00977.1-4"/>
    <property type="match status" value="1"/>
</dbReference>
<dbReference type="NCBIfam" id="TIGR01280">
    <property type="entry name" value="xseB"/>
    <property type="match status" value="1"/>
</dbReference>
<dbReference type="PANTHER" id="PTHR34137">
    <property type="entry name" value="EXODEOXYRIBONUCLEASE 7 SMALL SUBUNIT"/>
    <property type="match status" value="1"/>
</dbReference>
<dbReference type="PANTHER" id="PTHR34137:SF1">
    <property type="entry name" value="EXODEOXYRIBONUCLEASE 7 SMALL SUBUNIT"/>
    <property type="match status" value="1"/>
</dbReference>
<dbReference type="Pfam" id="PF02609">
    <property type="entry name" value="Exonuc_VII_S"/>
    <property type="match status" value="1"/>
</dbReference>
<dbReference type="PIRSF" id="PIRSF006488">
    <property type="entry name" value="Exonuc_VII_S"/>
    <property type="match status" value="1"/>
</dbReference>
<dbReference type="SUPFAM" id="SSF116842">
    <property type="entry name" value="XseB-like"/>
    <property type="match status" value="1"/>
</dbReference>
<protein>
    <recommendedName>
        <fullName evidence="1">Exodeoxyribonuclease 7 small subunit</fullName>
        <ecNumber evidence="1">3.1.11.6</ecNumber>
    </recommendedName>
    <alternativeName>
        <fullName evidence="1">Exodeoxyribonuclease VII small subunit</fullName>
        <shortName evidence="1">Exonuclease VII small subunit</shortName>
    </alternativeName>
</protein>
<gene>
    <name evidence="1" type="primary">xseB</name>
    <name type="ordered locus">Spro_1080</name>
</gene>
<keyword id="KW-0963">Cytoplasm</keyword>
<keyword id="KW-0269">Exonuclease</keyword>
<keyword id="KW-0378">Hydrolase</keyword>
<keyword id="KW-0540">Nuclease</keyword>
<proteinExistence type="inferred from homology"/>
<feature type="chain" id="PRO_1000059722" description="Exodeoxyribonuclease 7 small subunit">
    <location>
        <begin position="1"/>
        <end position="87"/>
    </location>
</feature>
<reference key="1">
    <citation type="submission" date="2007-09" db="EMBL/GenBank/DDBJ databases">
        <title>Complete sequence of chromosome of Serratia proteamaculans 568.</title>
        <authorList>
            <consortium name="US DOE Joint Genome Institute"/>
            <person name="Copeland A."/>
            <person name="Lucas S."/>
            <person name="Lapidus A."/>
            <person name="Barry K."/>
            <person name="Glavina del Rio T."/>
            <person name="Dalin E."/>
            <person name="Tice H."/>
            <person name="Pitluck S."/>
            <person name="Chain P."/>
            <person name="Malfatti S."/>
            <person name="Shin M."/>
            <person name="Vergez L."/>
            <person name="Schmutz J."/>
            <person name="Larimer F."/>
            <person name="Land M."/>
            <person name="Hauser L."/>
            <person name="Kyrpides N."/>
            <person name="Kim E."/>
            <person name="Taghavi S."/>
            <person name="Newman L."/>
            <person name="Vangronsveld J."/>
            <person name="van der Lelie D."/>
            <person name="Richardson P."/>
        </authorList>
    </citation>
    <scope>NUCLEOTIDE SEQUENCE [LARGE SCALE GENOMIC DNA]</scope>
    <source>
        <strain>568</strain>
    </source>
</reference>
<sequence>MPKKPAQSDSTEQSVSFESSLSELESIVTRLESGELPLEDALNEFERGVQLARQGQQKLQQAEQRVQILLNDSADDAALTPFTPDAE</sequence>